<protein>
    <recommendedName>
        <fullName evidence="1">Protein RecA</fullName>
    </recommendedName>
    <alternativeName>
        <fullName evidence="1">Recombinase A</fullName>
    </alternativeName>
</protein>
<comment type="function">
    <text evidence="1">Can catalyze the hydrolysis of ATP in the presence of single-stranded DNA, the ATP-dependent uptake of single-stranded DNA by duplex DNA, and the ATP-dependent hybridization of homologous single-stranded DNAs. It interacts with LexA causing its activation and leading to its autocatalytic cleavage.</text>
</comment>
<comment type="subcellular location">
    <subcellularLocation>
        <location evidence="1">Cytoplasm</location>
    </subcellularLocation>
</comment>
<comment type="similarity">
    <text evidence="1">Belongs to the RecA family.</text>
</comment>
<feature type="chain" id="PRO_0000122848" description="Protein RecA">
    <location>
        <begin position="1"/>
        <end position="379"/>
    </location>
</feature>
<feature type="binding site" evidence="1">
    <location>
        <begin position="79"/>
        <end position="86"/>
    </location>
    <ligand>
        <name>ATP</name>
        <dbReference type="ChEBI" id="CHEBI:30616"/>
    </ligand>
</feature>
<name>RECA_STRA3</name>
<gene>
    <name evidence="1" type="primary">recA</name>
    <name type="ordered locus">gbs2047</name>
</gene>
<organism>
    <name type="scientific">Streptococcus agalactiae serotype III (strain NEM316)</name>
    <dbReference type="NCBI Taxonomy" id="211110"/>
    <lineage>
        <taxon>Bacteria</taxon>
        <taxon>Bacillati</taxon>
        <taxon>Bacillota</taxon>
        <taxon>Bacilli</taxon>
        <taxon>Lactobacillales</taxon>
        <taxon>Streptococcaceae</taxon>
        <taxon>Streptococcus</taxon>
    </lineage>
</organism>
<proteinExistence type="inferred from homology"/>
<reference key="1">
    <citation type="journal article" date="2002" name="Mol. Microbiol.">
        <title>Genome sequence of Streptococcus agalactiae, a pathogen causing invasive neonatal disease.</title>
        <authorList>
            <person name="Glaser P."/>
            <person name="Rusniok C."/>
            <person name="Buchrieser C."/>
            <person name="Chevalier F."/>
            <person name="Frangeul L."/>
            <person name="Msadek T."/>
            <person name="Zouine M."/>
            <person name="Couve E."/>
            <person name="Lalioui L."/>
            <person name="Poyart C."/>
            <person name="Trieu-Cuot P."/>
            <person name="Kunst F."/>
        </authorList>
    </citation>
    <scope>NUCLEOTIDE SEQUENCE [LARGE SCALE GENOMIC DNA]</scope>
    <source>
        <strain>NEM316</strain>
    </source>
</reference>
<sequence length="379" mass="40917">MAKKTKKAEEITKKFGDERRKALDDALKNIEKDFGKGAVMRLGERAEQKVQVMSSGSLALDIALGAGGYPKGRIVEIYGPESSGKTTVALHAVAQAQKEGGIAAFIDAEHALDPAYAAALGVNIDELLLSQPDSGEQGLEIAGKLIDSGAVDLVVVDSVAALVPRAEIDGDIGDSHVGLQARMMSQAMRKLSASINKTKTIAIFINQLREKVGVMFGNPETTPGGRALKFYSSVRLDVRGNTQIKGTGEHKDHNVGKETKIKVVKNKVAPPFREAFVEIMYGEGISRTGELIKIASDLDIIQKAGAWYSYNGEKIGQGSENAKKYLADNPAIFDEIDHKVRVHFGMTEDDSPVQSELVEEKNEADDLVLDLDNAIEIEE</sequence>
<accession>P65979</accession>
<accession>Q8DWW8</accession>
<accession>Q8E2S0</accession>
<keyword id="KW-0067">ATP-binding</keyword>
<keyword id="KW-0963">Cytoplasm</keyword>
<keyword id="KW-0227">DNA damage</keyword>
<keyword id="KW-0233">DNA recombination</keyword>
<keyword id="KW-0234">DNA repair</keyword>
<keyword id="KW-0238">DNA-binding</keyword>
<keyword id="KW-0547">Nucleotide-binding</keyword>
<keyword id="KW-0742">SOS response</keyword>
<evidence type="ECO:0000255" key="1">
    <source>
        <dbReference type="HAMAP-Rule" id="MF_00268"/>
    </source>
</evidence>
<dbReference type="EMBL" id="AL766856">
    <property type="protein sequence ID" value="CAD47706.1"/>
    <property type="molecule type" value="Genomic_DNA"/>
</dbReference>
<dbReference type="RefSeq" id="WP_001085741.1">
    <property type="nucleotide sequence ID" value="NC_004368.1"/>
</dbReference>
<dbReference type="SMR" id="P65979"/>
<dbReference type="GeneID" id="66886829"/>
<dbReference type="KEGG" id="san:recA"/>
<dbReference type="eggNOG" id="COG0468">
    <property type="taxonomic scope" value="Bacteria"/>
</dbReference>
<dbReference type="HOGENOM" id="CLU_040469_3_2_9"/>
<dbReference type="Proteomes" id="UP000000823">
    <property type="component" value="Chromosome"/>
</dbReference>
<dbReference type="GO" id="GO:0005829">
    <property type="term" value="C:cytosol"/>
    <property type="evidence" value="ECO:0007669"/>
    <property type="project" value="TreeGrafter"/>
</dbReference>
<dbReference type="GO" id="GO:0005524">
    <property type="term" value="F:ATP binding"/>
    <property type="evidence" value="ECO:0007669"/>
    <property type="project" value="UniProtKB-UniRule"/>
</dbReference>
<dbReference type="GO" id="GO:0016887">
    <property type="term" value="F:ATP hydrolysis activity"/>
    <property type="evidence" value="ECO:0007669"/>
    <property type="project" value="InterPro"/>
</dbReference>
<dbReference type="GO" id="GO:0140664">
    <property type="term" value="F:ATP-dependent DNA damage sensor activity"/>
    <property type="evidence" value="ECO:0007669"/>
    <property type="project" value="InterPro"/>
</dbReference>
<dbReference type="GO" id="GO:0003684">
    <property type="term" value="F:damaged DNA binding"/>
    <property type="evidence" value="ECO:0007669"/>
    <property type="project" value="UniProtKB-UniRule"/>
</dbReference>
<dbReference type="GO" id="GO:0003697">
    <property type="term" value="F:single-stranded DNA binding"/>
    <property type="evidence" value="ECO:0007669"/>
    <property type="project" value="UniProtKB-UniRule"/>
</dbReference>
<dbReference type="GO" id="GO:0006310">
    <property type="term" value="P:DNA recombination"/>
    <property type="evidence" value="ECO:0007669"/>
    <property type="project" value="UniProtKB-UniRule"/>
</dbReference>
<dbReference type="GO" id="GO:0006281">
    <property type="term" value="P:DNA repair"/>
    <property type="evidence" value="ECO:0007669"/>
    <property type="project" value="UniProtKB-UniRule"/>
</dbReference>
<dbReference type="GO" id="GO:0009432">
    <property type="term" value="P:SOS response"/>
    <property type="evidence" value="ECO:0007669"/>
    <property type="project" value="UniProtKB-UniRule"/>
</dbReference>
<dbReference type="CDD" id="cd00983">
    <property type="entry name" value="RecA"/>
    <property type="match status" value="1"/>
</dbReference>
<dbReference type="FunFam" id="3.40.50.300:FF:000087">
    <property type="entry name" value="Recombinase RecA"/>
    <property type="match status" value="1"/>
</dbReference>
<dbReference type="Gene3D" id="3.40.50.300">
    <property type="entry name" value="P-loop containing nucleotide triphosphate hydrolases"/>
    <property type="match status" value="1"/>
</dbReference>
<dbReference type="HAMAP" id="MF_00268">
    <property type="entry name" value="RecA"/>
    <property type="match status" value="1"/>
</dbReference>
<dbReference type="InterPro" id="IPR003593">
    <property type="entry name" value="AAA+_ATPase"/>
</dbReference>
<dbReference type="InterPro" id="IPR013765">
    <property type="entry name" value="DNA_recomb/repair_RecA"/>
</dbReference>
<dbReference type="InterPro" id="IPR020584">
    <property type="entry name" value="DNA_recomb/repair_RecA_CS"/>
</dbReference>
<dbReference type="InterPro" id="IPR027417">
    <property type="entry name" value="P-loop_NTPase"/>
</dbReference>
<dbReference type="InterPro" id="IPR049261">
    <property type="entry name" value="RecA-like_C"/>
</dbReference>
<dbReference type="InterPro" id="IPR049428">
    <property type="entry name" value="RecA-like_N"/>
</dbReference>
<dbReference type="InterPro" id="IPR020588">
    <property type="entry name" value="RecA_ATP-bd"/>
</dbReference>
<dbReference type="InterPro" id="IPR023400">
    <property type="entry name" value="RecA_C_sf"/>
</dbReference>
<dbReference type="InterPro" id="IPR020587">
    <property type="entry name" value="RecA_monomer-monomer_interface"/>
</dbReference>
<dbReference type="NCBIfam" id="TIGR02012">
    <property type="entry name" value="tigrfam_recA"/>
    <property type="match status" value="1"/>
</dbReference>
<dbReference type="PANTHER" id="PTHR45900:SF1">
    <property type="entry name" value="MITOCHONDRIAL DNA REPAIR PROTEIN RECA HOMOLOG-RELATED"/>
    <property type="match status" value="1"/>
</dbReference>
<dbReference type="PANTHER" id="PTHR45900">
    <property type="entry name" value="RECA"/>
    <property type="match status" value="1"/>
</dbReference>
<dbReference type="Pfam" id="PF00154">
    <property type="entry name" value="RecA"/>
    <property type="match status" value="1"/>
</dbReference>
<dbReference type="Pfam" id="PF21096">
    <property type="entry name" value="RecA_C"/>
    <property type="match status" value="1"/>
</dbReference>
<dbReference type="PRINTS" id="PR00142">
    <property type="entry name" value="RECA"/>
</dbReference>
<dbReference type="SMART" id="SM00382">
    <property type="entry name" value="AAA"/>
    <property type="match status" value="1"/>
</dbReference>
<dbReference type="SUPFAM" id="SSF52540">
    <property type="entry name" value="P-loop containing nucleoside triphosphate hydrolases"/>
    <property type="match status" value="1"/>
</dbReference>
<dbReference type="SUPFAM" id="SSF54752">
    <property type="entry name" value="RecA protein, C-terminal domain"/>
    <property type="match status" value="1"/>
</dbReference>
<dbReference type="PROSITE" id="PS00321">
    <property type="entry name" value="RECA_1"/>
    <property type="match status" value="1"/>
</dbReference>
<dbReference type="PROSITE" id="PS50162">
    <property type="entry name" value="RECA_2"/>
    <property type="match status" value="1"/>
</dbReference>
<dbReference type="PROSITE" id="PS50163">
    <property type="entry name" value="RECA_3"/>
    <property type="match status" value="1"/>
</dbReference>